<reference key="1">
    <citation type="journal article" date="1990" name="Nature">
        <title>Striking conservation of TFIID in Schizosaccharomyces pombe and Saccharomyces cerevisiae.</title>
        <authorList>
            <person name="Fikes J.D."/>
            <person name="Becker D.M."/>
            <person name="Winston F."/>
            <person name="Guarente L."/>
        </authorList>
    </citation>
    <scope>NUCLEOTIDE SEQUENCE [GENOMIC DNA]</scope>
</reference>
<reference key="2">
    <citation type="journal article" date="1990" name="Genes Dev.">
        <title>Cloning of the Schizosaccharomyces pombe TFIID gene reveals a strong conservation of functional domains present in Saccharomyces cerevisiae TFIID.</title>
        <authorList>
            <person name="Hoffmann A."/>
            <person name="Horikoshi M."/>
            <person name="Wang C.K."/>
            <person name="Schroeder S."/>
            <person name="Weil P.A."/>
            <person name="Roeder R.G."/>
        </authorList>
    </citation>
    <scope>NUCLEOTIDE SEQUENCE [GENOMIC DNA]</scope>
    <source>
        <strain>972 / ATCC 24843</strain>
    </source>
</reference>
<reference key="3">
    <citation type="journal article" date="2002" name="Nature">
        <title>The genome sequence of Schizosaccharomyces pombe.</title>
        <authorList>
            <person name="Wood V."/>
            <person name="Gwilliam R."/>
            <person name="Rajandream M.A."/>
            <person name="Lyne M.H."/>
            <person name="Lyne R."/>
            <person name="Stewart A."/>
            <person name="Sgouros J.G."/>
            <person name="Peat N."/>
            <person name="Hayles J."/>
            <person name="Baker S.G."/>
            <person name="Basham D."/>
            <person name="Bowman S."/>
            <person name="Brooks K."/>
            <person name="Brown D."/>
            <person name="Brown S."/>
            <person name="Chillingworth T."/>
            <person name="Churcher C.M."/>
            <person name="Collins M."/>
            <person name="Connor R."/>
            <person name="Cronin A."/>
            <person name="Davis P."/>
            <person name="Feltwell T."/>
            <person name="Fraser A."/>
            <person name="Gentles S."/>
            <person name="Goble A."/>
            <person name="Hamlin N."/>
            <person name="Harris D.E."/>
            <person name="Hidalgo J."/>
            <person name="Hodgson G."/>
            <person name="Holroyd S."/>
            <person name="Hornsby T."/>
            <person name="Howarth S."/>
            <person name="Huckle E.J."/>
            <person name="Hunt S."/>
            <person name="Jagels K."/>
            <person name="James K.D."/>
            <person name="Jones L."/>
            <person name="Jones M."/>
            <person name="Leather S."/>
            <person name="McDonald S."/>
            <person name="McLean J."/>
            <person name="Mooney P."/>
            <person name="Moule S."/>
            <person name="Mungall K.L."/>
            <person name="Murphy L.D."/>
            <person name="Niblett D."/>
            <person name="Odell C."/>
            <person name="Oliver K."/>
            <person name="O'Neil S."/>
            <person name="Pearson D."/>
            <person name="Quail M.A."/>
            <person name="Rabbinowitsch E."/>
            <person name="Rutherford K.M."/>
            <person name="Rutter S."/>
            <person name="Saunders D."/>
            <person name="Seeger K."/>
            <person name="Sharp S."/>
            <person name="Skelton J."/>
            <person name="Simmonds M.N."/>
            <person name="Squares R."/>
            <person name="Squares S."/>
            <person name="Stevens K."/>
            <person name="Taylor K."/>
            <person name="Taylor R.G."/>
            <person name="Tivey A."/>
            <person name="Walsh S.V."/>
            <person name="Warren T."/>
            <person name="Whitehead S."/>
            <person name="Woodward J.R."/>
            <person name="Volckaert G."/>
            <person name="Aert R."/>
            <person name="Robben J."/>
            <person name="Grymonprez B."/>
            <person name="Weltjens I."/>
            <person name="Vanstreels E."/>
            <person name="Rieger M."/>
            <person name="Schaefer M."/>
            <person name="Mueller-Auer S."/>
            <person name="Gabel C."/>
            <person name="Fuchs M."/>
            <person name="Duesterhoeft A."/>
            <person name="Fritzc C."/>
            <person name="Holzer E."/>
            <person name="Moestl D."/>
            <person name="Hilbert H."/>
            <person name="Borzym K."/>
            <person name="Langer I."/>
            <person name="Beck A."/>
            <person name="Lehrach H."/>
            <person name="Reinhardt R."/>
            <person name="Pohl T.M."/>
            <person name="Eger P."/>
            <person name="Zimmermann W."/>
            <person name="Wedler H."/>
            <person name="Wambutt R."/>
            <person name="Purnelle B."/>
            <person name="Goffeau A."/>
            <person name="Cadieu E."/>
            <person name="Dreano S."/>
            <person name="Gloux S."/>
            <person name="Lelaure V."/>
            <person name="Mottier S."/>
            <person name="Galibert F."/>
            <person name="Aves S.J."/>
            <person name="Xiang Z."/>
            <person name="Hunt C."/>
            <person name="Moore K."/>
            <person name="Hurst S.M."/>
            <person name="Lucas M."/>
            <person name="Rochet M."/>
            <person name="Gaillardin C."/>
            <person name="Tallada V.A."/>
            <person name="Garzon A."/>
            <person name="Thode G."/>
            <person name="Daga R.R."/>
            <person name="Cruzado L."/>
            <person name="Jimenez J."/>
            <person name="Sanchez M."/>
            <person name="del Rey F."/>
            <person name="Benito J."/>
            <person name="Dominguez A."/>
            <person name="Revuelta J.L."/>
            <person name="Moreno S."/>
            <person name="Armstrong J."/>
            <person name="Forsburg S.L."/>
            <person name="Cerutti L."/>
            <person name="Lowe T."/>
            <person name="McCombie W.R."/>
            <person name="Paulsen I."/>
            <person name="Potashkin J."/>
            <person name="Shpakovski G.V."/>
            <person name="Ussery D."/>
            <person name="Barrell B.G."/>
            <person name="Nurse P."/>
        </authorList>
    </citation>
    <scope>NUCLEOTIDE SEQUENCE [LARGE SCALE GENOMIC DNA]</scope>
    <source>
        <strain>972 / ATCC 24843</strain>
    </source>
</reference>
<dbReference type="EMBL" id="X53415">
    <property type="protein sequence ID" value="CAA37494.1"/>
    <property type="molecule type" value="Genomic_DNA"/>
</dbReference>
<dbReference type="EMBL" id="Z66525">
    <property type="protein sequence ID" value="CAA91430.1"/>
    <property type="molecule type" value="Genomic_DNA"/>
</dbReference>
<dbReference type="EMBL" id="CU329670">
    <property type="protein sequence ID" value="CAB66471.1"/>
    <property type="molecule type" value="Genomic_DNA"/>
</dbReference>
<dbReference type="PIR" id="A35873">
    <property type="entry name" value="A35873"/>
</dbReference>
<dbReference type="RefSeq" id="NP_594566.1">
    <property type="nucleotide sequence ID" value="NM_001019995.2"/>
</dbReference>
<dbReference type="SMR" id="P17871"/>
<dbReference type="BioGRID" id="278079">
    <property type="interactions" value="13"/>
</dbReference>
<dbReference type="ComplexPortal" id="CPX-8904">
    <property type="entry name" value="General transcription factor TFIIIB complex"/>
</dbReference>
<dbReference type="FunCoup" id="P17871">
    <property type="interactions" value="983"/>
</dbReference>
<dbReference type="IntAct" id="P17871">
    <property type="interactions" value="4"/>
</dbReference>
<dbReference type="STRING" id="284812.P17871"/>
<dbReference type="iPTMnet" id="P17871"/>
<dbReference type="PaxDb" id="4896-SPAC29E6.08.1"/>
<dbReference type="EnsemblFungi" id="SPAC29E6.08.1">
    <property type="protein sequence ID" value="SPAC29E6.08.1:pep"/>
    <property type="gene ID" value="SPAC29E6.08"/>
</dbReference>
<dbReference type="GeneID" id="2541582"/>
<dbReference type="KEGG" id="spo:2541582"/>
<dbReference type="PomBase" id="SPAC29E6.08">
    <property type="gene designation" value="tbp1"/>
</dbReference>
<dbReference type="VEuPathDB" id="FungiDB:SPAC29E6.08"/>
<dbReference type="eggNOG" id="KOG3302">
    <property type="taxonomic scope" value="Eukaryota"/>
</dbReference>
<dbReference type="HOGENOM" id="CLU_060161_4_2_1"/>
<dbReference type="InParanoid" id="P17871"/>
<dbReference type="OMA" id="NCEYEPE"/>
<dbReference type="PhylomeDB" id="P17871"/>
<dbReference type="Reactome" id="R-SPO-674695">
    <property type="pathway name" value="RNA Polymerase II Pre-transcription Events"/>
</dbReference>
<dbReference type="Reactome" id="R-SPO-6807505">
    <property type="pathway name" value="RNA polymerase II transcribes snRNA genes"/>
</dbReference>
<dbReference type="Reactome" id="R-SPO-73772">
    <property type="pathway name" value="RNA Polymerase I Promoter Escape"/>
</dbReference>
<dbReference type="Reactome" id="R-SPO-73776">
    <property type="pathway name" value="RNA Polymerase II Promoter Escape"/>
</dbReference>
<dbReference type="Reactome" id="R-SPO-73779">
    <property type="pathway name" value="RNA Polymerase II Transcription Pre-Initiation And Promoter Opening"/>
</dbReference>
<dbReference type="Reactome" id="R-SPO-75953">
    <property type="pathway name" value="RNA Polymerase II Transcription Initiation"/>
</dbReference>
<dbReference type="Reactome" id="R-SPO-76042">
    <property type="pathway name" value="RNA Polymerase II Transcription Initiation And Promoter Clearance"/>
</dbReference>
<dbReference type="Reactome" id="R-SPO-76061">
    <property type="pathway name" value="RNA Polymerase III Transcription Initiation From Type 1 Promoter"/>
</dbReference>
<dbReference type="Reactome" id="R-SPO-76066">
    <property type="pathway name" value="RNA Polymerase III Transcription Initiation From Type 2 Promoter"/>
</dbReference>
<dbReference type="Reactome" id="R-SPO-9018519">
    <property type="pathway name" value="Estrogen-dependent gene expression"/>
</dbReference>
<dbReference type="PRO" id="PR:P17871"/>
<dbReference type="Proteomes" id="UP000002485">
    <property type="component" value="Chromosome I"/>
</dbReference>
<dbReference type="GO" id="GO:0005634">
    <property type="term" value="C:nucleus"/>
    <property type="evidence" value="ECO:0007005"/>
    <property type="project" value="PomBase"/>
</dbReference>
<dbReference type="GO" id="GO:0000120">
    <property type="term" value="C:RNA polymerase I transcription regulator complex"/>
    <property type="evidence" value="ECO:0000314"/>
    <property type="project" value="PomBase"/>
</dbReference>
<dbReference type="GO" id="GO:0005669">
    <property type="term" value="C:transcription factor TFIID complex"/>
    <property type="evidence" value="ECO:0000314"/>
    <property type="project" value="PomBase"/>
</dbReference>
<dbReference type="GO" id="GO:0000126">
    <property type="term" value="C:transcription factor TFIIIB complex"/>
    <property type="evidence" value="ECO:0000266"/>
    <property type="project" value="PomBase"/>
</dbReference>
<dbReference type="GO" id="GO:0001181">
    <property type="term" value="F:RNA polymerase I general transcription initiation factor activity"/>
    <property type="evidence" value="ECO:0000266"/>
    <property type="project" value="PomBase"/>
</dbReference>
<dbReference type="GO" id="GO:0000979">
    <property type="term" value="F:RNA polymerase II core promoter sequence-specific DNA binding"/>
    <property type="evidence" value="ECO:0000314"/>
    <property type="project" value="PomBase"/>
</dbReference>
<dbReference type="GO" id="GO:0016251">
    <property type="term" value="F:RNA polymerase II general transcription initiation factor activity"/>
    <property type="evidence" value="ECO:0000314"/>
    <property type="project" value="PomBase"/>
</dbReference>
<dbReference type="GO" id="GO:0000995">
    <property type="term" value="F:RNA polymerase III general transcription initiation factor activity"/>
    <property type="evidence" value="ECO:0000266"/>
    <property type="project" value="PomBase"/>
</dbReference>
<dbReference type="GO" id="GO:0001006">
    <property type="term" value="F:RNA polymerase III type 3 promoter sequence-specific DNA binding"/>
    <property type="evidence" value="ECO:0000314"/>
    <property type="project" value="PomBase"/>
</dbReference>
<dbReference type="GO" id="GO:0006352">
    <property type="term" value="P:DNA-templated transcription initiation"/>
    <property type="evidence" value="ECO:0000318"/>
    <property type="project" value="GO_Central"/>
</dbReference>
<dbReference type="GO" id="GO:0006361">
    <property type="term" value="P:transcription initiation at RNA polymerase I promoter"/>
    <property type="evidence" value="ECO:0000314"/>
    <property type="project" value="PomBase"/>
</dbReference>
<dbReference type="GO" id="GO:0006367">
    <property type="term" value="P:transcription initiation at RNA polymerase II promoter"/>
    <property type="evidence" value="ECO:0000314"/>
    <property type="project" value="PomBase"/>
</dbReference>
<dbReference type="GO" id="GO:0006384">
    <property type="term" value="P:transcription initiation at RNA polymerase III promoter"/>
    <property type="evidence" value="ECO:0000266"/>
    <property type="project" value="PomBase"/>
</dbReference>
<dbReference type="CDD" id="cd04516">
    <property type="entry name" value="TBP_eukaryotes"/>
    <property type="match status" value="1"/>
</dbReference>
<dbReference type="FunFam" id="3.30.310.10:FF:000001">
    <property type="entry name" value="TATA-box-binding protein 2"/>
    <property type="match status" value="1"/>
</dbReference>
<dbReference type="FunFam" id="3.30.310.10:FF:000002">
    <property type="entry name" value="TATA-box-binding protein 2"/>
    <property type="match status" value="1"/>
</dbReference>
<dbReference type="Gene3D" id="3.30.310.10">
    <property type="entry name" value="TATA-Binding Protein"/>
    <property type="match status" value="2"/>
</dbReference>
<dbReference type="HAMAP" id="MF_00408">
    <property type="entry name" value="TATA_bind_prot_arch"/>
    <property type="match status" value="1"/>
</dbReference>
<dbReference type="InterPro" id="IPR000814">
    <property type="entry name" value="TBP"/>
</dbReference>
<dbReference type="InterPro" id="IPR030491">
    <property type="entry name" value="TBP_CS"/>
</dbReference>
<dbReference type="InterPro" id="IPR012295">
    <property type="entry name" value="TBP_dom_sf"/>
</dbReference>
<dbReference type="InterPro" id="IPR033710">
    <property type="entry name" value="TBP_eukaryotic"/>
</dbReference>
<dbReference type="PANTHER" id="PTHR10126">
    <property type="entry name" value="TATA-BOX BINDING PROTEIN"/>
    <property type="match status" value="1"/>
</dbReference>
<dbReference type="Pfam" id="PF00352">
    <property type="entry name" value="TBP"/>
    <property type="match status" value="2"/>
</dbReference>
<dbReference type="PRINTS" id="PR00686">
    <property type="entry name" value="TIFACTORIID"/>
</dbReference>
<dbReference type="SUPFAM" id="SSF55945">
    <property type="entry name" value="TATA-box binding protein-like"/>
    <property type="match status" value="2"/>
</dbReference>
<dbReference type="PROSITE" id="PS00351">
    <property type="entry name" value="TFIID"/>
    <property type="match status" value="2"/>
</dbReference>
<protein>
    <recommendedName>
        <fullName>TATA-box-binding protein</fullName>
    </recommendedName>
    <alternativeName>
        <fullName>TATA sequence-binding protein</fullName>
        <shortName>TBP</shortName>
    </alternativeName>
    <alternativeName>
        <fullName>TATA-binding factor</fullName>
    </alternativeName>
    <alternativeName>
        <fullName>TATA-box factor</fullName>
    </alternativeName>
    <alternativeName>
        <fullName>Transcription initiation factor TFIID TBP subunit</fullName>
    </alternativeName>
</protein>
<name>TBP_SCHPO</name>
<organism>
    <name type="scientific">Schizosaccharomyces pombe (strain 972 / ATCC 24843)</name>
    <name type="common">Fission yeast</name>
    <dbReference type="NCBI Taxonomy" id="284812"/>
    <lineage>
        <taxon>Eukaryota</taxon>
        <taxon>Fungi</taxon>
        <taxon>Dikarya</taxon>
        <taxon>Ascomycota</taxon>
        <taxon>Taphrinomycotina</taxon>
        <taxon>Schizosaccharomycetes</taxon>
        <taxon>Schizosaccharomycetales</taxon>
        <taxon>Schizosaccharomycetaceae</taxon>
        <taxon>Schizosaccharomyces</taxon>
    </lineage>
</organism>
<accession>P17871</accession>
<gene>
    <name type="primary">tbp1</name>
    <name type="synonym">tbp</name>
    <name type="synonym">tdf1</name>
    <name type="ORF">SPAC29E6.08</name>
    <name type="ORF">SPAC30.12</name>
</gene>
<keyword id="KW-0238">DNA-binding</keyword>
<keyword id="KW-0539">Nucleus</keyword>
<keyword id="KW-1185">Reference proteome</keyword>
<keyword id="KW-0677">Repeat</keyword>
<keyword id="KW-0804">Transcription</keyword>
<feature type="chain" id="PRO_0000153989" description="TATA-box-binding protein">
    <location>
        <begin position="1"/>
        <end position="231"/>
    </location>
</feature>
<feature type="repeat" description="1">
    <location>
        <begin position="58"/>
        <end position="134"/>
    </location>
</feature>
<feature type="repeat" description="2">
    <location>
        <begin position="148"/>
        <end position="225"/>
    </location>
</feature>
<evidence type="ECO:0000305" key="1"/>
<comment type="function">
    <text>General transcription factor that functions at the core of the DNA-binding multiprotein factor TFIID. Binding of TFIID to the TATA box is the initial transcriptional step of the pre-initiation complex (PIC), playing a role in the activation of eukaryotic genes transcribed by RNA polymerase II.</text>
</comment>
<comment type="subunit">
    <text>Belongs to the TFIID complex together with the TBP-associated factors (TAFs). Binds DNA as monomer.</text>
</comment>
<comment type="subcellular location">
    <subcellularLocation>
        <location>Nucleus</location>
    </subcellularLocation>
</comment>
<comment type="similarity">
    <text evidence="1">Belongs to the TBP family.</text>
</comment>
<sequence length="231" mass="25442">MDFALPTTASQASAFMNNSSLTFPVLPNANNEATNETADSGDAEVSKNEGVSGIVPTLQNIVATVNLDCRLDLKTIALHARNAEYNPKRFAAVIMRIREPKSTALIFASGKMVVLGGKSEDDSKLASRKYARIIQKLGFNAKFTDFKIQNIVGSCDVKFPIRLEGLAYSHGTFSSYEPELFPGLIYRMVKPKVVLLIFVSGKIVLTGAKVREEIYQAFEAIYPVLSEFRKH</sequence>
<proteinExistence type="inferred from homology"/>